<accession>O28985</accession>
<feature type="chain" id="PRO_0000127982" description="Uncharacterized protein AF_1283">
    <location>
        <begin position="1"/>
        <end position="100"/>
    </location>
</feature>
<feature type="transmembrane region" description="Helical" evidence="1">
    <location>
        <begin position="7"/>
        <end position="28"/>
    </location>
</feature>
<feature type="transmembrane region" description="Helical" evidence="1">
    <location>
        <begin position="38"/>
        <end position="60"/>
    </location>
</feature>
<feature type="transmembrane region" description="Helical" evidence="1">
    <location>
        <begin position="65"/>
        <end position="87"/>
    </location>
</feature>
<protein>
    <recommendedName>
        <fullName>Uncharacterized protein AF_1283</fullName>
    </recommendedName>
</protein>
<keyword id="KW-1003">Cell membrane</keyword>
<keyword id="KW-0472">Membrane</keyword>
<keyword id="KW-1185">Reference proteome</keyword>
<keyword id="KW-0812">Transmembrane</keyword>
<keyword id="KW-1133">Transmembrane helix</keyword>
<dbReference type="EMBL" id="AE000782">
    <property type="protein sequence ID" value="AAB89976.1"/>
    <property type="molecule type" value="Genomic_DNA"/>
</dbReference>
<dbReference type="PIR" id="B69410">
    <property type="entry name" value="B69410"/>
</dbReference>
<dbReference type="RefSeq" id="WP_010878778.1">
    <property type="nucleotide sequence ID" value="NC_000917.1"/>
</dbReference>
<dbReference type="STRING" id="224325.AF_1283"/>
<dbReference type="PaxDb" id="224325-AF_1283"/>
<dbReference type="EnsemblBacteria" id="AAB89976">
    <property type="protein sequence ID" value="AAB89976"/>
    <property type="gene ID" value="AF_1283"/>
</dbReference>
<dbReference type="KEGG" id="afu:AF_1283"/>
<dbReference type="eggNOG" id="arCOG10228">
    <property type="taxonomic scope" value="Archaea"/>
</dbReference>
<dbReference type="HOGENOM" id="CLU_2257243_0_0_2"/>
<dbReference type="OrthoDB" id="51658at2157"/>
<dbReference type="Proteomes" id="UP000002199">
    <property type="component" value="Chromosome"/>
</dbReference>
<dbReference type="GO" id="GO:0005886">
    <property type="term" value="C:plasma membrane"/>
    <property type="evidence" value="ECO:0007669"/>
    <property type="project" value="UniProtKB-SubCell"/>
</dbReference>
<comment type="subcellular location">
    <subcellularLocation>
        <location evidence="2">Cell membrane</location>
        <topology evidence="2">Multi-pass membrane protein</topology>
    </subcellularLocation>
</comment>
<name>Y1283_ARCFU</name>
<sequence length="100" mass="10170">MGETSVTLIGLIVGLLFGLSGIATLLSLMSDVVSDAQAQLSQLGVASTLVMLVIALILIIKVRVLSALIVGAVIGAVLNLVLQANGVNILEMLRAAVFGT</sequence>
<evidence type="ECO:0000255" key="1"/>
<evidence type="ECO:0000305" key="2"/>
<gene>
    <name type="ordered locus">AF_1283</name>
</gene>
<organism>
    <name type="scientific">Archaeoglobus fulgidus (strain ATCC 49558 / DSM 4304 / JCM 9628 / NBRC 100126 / VC-16)</name>
    <dbReference type="NCBI Taxonomy" id="224325"/>
    <lineage>
        <taxon>Archaea</taxon>
        <taxon>Methanobacteriati</taxon>
        <taxon>Methanobacteriota</taxon>
        <taxon>Archaeoglobi</taxon>
        <taxon>Archaeoglobales</taxon>
        <taxon>Archaeoglobaceae</taxon>
        <taxon>Archaeoglobus</taxon>
    </lineage>
</organism>
<reference key="1">
    <citation type="journal article" date="1997" name="Nature">
        <title>The complete genome sequence of the hyperthermophilic, sulphate-reducing archaeon Archaeoglobus fulgidus.</title>
        <authorList>
            <person name="Klenk H.-P."/>
            <person name="Clayton R.A."/>
            <person name="Tomb J.-F."/>
            <person name="White O."/>
            <person name="Nelson K.E."/>
            <person name="Ketchum K.A."/>
            <person name="Dodson R.J."/>
            <person name="Gwinn M.L."/>
            <person name="Hickey E.K."/>
            <person name="Peterson J.D."/>
            <person name="Richardson D.L."/>
            <person name="Kerlavage A.R."/>
            <person name="Graham D.E."/>
            <person name="Kyrpides N.C."/>
            <person name="Fleischmann R.D."/>
            <person name="Quackenbush J."/>
            <person name="Lee N.H."/>
            <person name="Sutton G.G."/>
            <person name="Gill S.R."/>
            <person name="Kirkness E.F."/>
            <person name="Dougherty B.A."/>
            <person name="McKenney K."/>
            <person name="Adams M.D."/>
            <person name="Loftus B.J."/>
            <person name="Peterson S.N."/>
            <person name="Reich C.I."/>
            <person name="McNeil L.K."/>
            <person name="Badger J.H."/>
            <person name="Glodek A."/>
            <person name="Zhou L."/>
            <person name="Overbeek R."/>
            <person name="Gocayne J.D."/>
            <person name="Weidman J.F."/>
            <person name="McDonald L.A."/>
            <person name="Utterback T.R."/>
            <person name="Cotton M.D."/>
            <person name="Spriggs T."/>
            <person name="Artiach P."/>
            <person name="Kaine B.P."/>
            <person name="Sykes S.M."/>
            <person name="Sadow P.W."/>
            <person name="D'Andrea K.P."/>
            <person name="Bowman C."/>
            <person name="Fujii C."/>
            <person name="Garland S.A."/>
            <person name="Mason T.M."/>
            <person name="Olsen G.J."/>
            <person name="Fraser C.M."/>
            <person name="Smith H.O."/>
            <person name="Woese C.R."/>
            <person name="Venter J.C."/>
        </authorList>
    </citation>
    <scope>NUCLEOTIDE SEQUENCE [LARGE SCALE GENOMIC DNA]</scope>
    <source>
        <strain>ATCC 49558 / DSM 4304 / JCM 9628 / NBRC 100126 / VC-16</strain>
    </source>
</reference>
<proteinExistence type="predicted"/>